<dbReference type="EC" id="2.3.3.16"/>
<dbReference type="EMBL" id="AB017159">
    <property type="protein sequence ID" value="BAA32557.1"/>
    <property type="molecule type" value="mRNA"/>
</dbReference>
<dbReference type="SMR" id="O80433"/>
<dbReference type="BioCyc" id="MetaCyc:MONOMER-15824"/>
<dbReference type="BRENDA" id="2.3.3.16">
    <property type="organism ID" value="1841"/>
</dbReference>
<dbReference type="UniPathway" id="UPA00223">
    <property type="reaction ID" value="UER00717"/>
</dbReference>
<dbReference type="GO" id="GO:0005759">
    <property type="term" value="C:mitochondrial matrix"/>
    <property type="evidence" value="ECO:0007669"/>
    <property type="project" value="UniProtKB-SubCell"/>
</dbReference>
<dbReference type="GO" id="GO:0004108">
    <property type="term" value="F:citrate (Si)-synthase activity"/>
    <property type="evidence" value="ECO:0007669"/>
    <property type="project" value="InterPro"/>
</dbReference>
<dbReference type="GO" id="GO:0005975">
    <property type="term" value="P:carbohydrate metabolic process"/>
    <property type="evidence" value="ECO:0007669"/>
    <property type="project" value="TreeGrafter"/>
</dbReference>
<dbReference type="GO" id="GO:0006101">
    <property type="term" value="P:citrate metabolic process"/>
    <property type="evidence" value="ECO:0007669"/>
    <property type="project" value="InterPro"/>
</dbReference>
<dbReference type="GO" id="GO:0006099">
    <property type="term" value="P:tricarboxylic acid cycle"/>
    <property type="evidence" value="ECO:0007669"/>
    <property type="project" value="UniProtKB-UniPathway"/>
</dbReference>
<dbReference type="CDD" id="cd06105">
    <property type="entry name" value="ScCit1-2_like"/>
    <property type="match status" value="1"/>
</dbReference>
<dbReference type="FunFam" id="1.10.230.10:FF:000001">
    <property type="entry name" value="Citrate synthase"/>
    <property type="match status" value="1"/>
</dbReference>
<dbReference type="FunFam" id="1.10.580.10:FF:000001">
    <property type="entry name" value="Citrate synthase"/>
    <property type="match status" value="1"/>
</dbReference>
<dbReference type="Gene3D" id="1.10.580.10">
    <property type="entry name" value="Citrate Synthase, domain 1"/>
    <property type="match status" value="1"/>
</dbReference>
<dbReference type="Gene3D" id="1.10.230.10">
    <property type="entry name" value="Cytochrome P450-Terp, domain 2"/>
    <property type="match status" value="1"/>
</dbReference>
<dbReference type="InterPro" id="IPR016142">
    <property type="entry name" value="Citrate_synth-like_lrg_a-sub"/>
</dbReference>
<dbReference type="InterPro" id="IPR016143">
    <property type="entry name" value="Citrate_synth-like_sm_a-sub"/>
</dbReference>
<dbReference type="InterPro" id="IPR002020">
    <property type="entry name" value="Citrate_synthase"/>
</dbReference>
<dbReference type="InterPro" id="IPR019810">
    <property type="entry name" value="Citrate_synthase_AS"/>
</dbReference>
<dbReference type="InterPro" id="IPR010109">
    <property type="entry name" value="Citrate_synthase_euk"/>
</dbReference>
<dbReference type="InterPro" id="IPR036969">
    <property type="entry name" value="Citrate_synthase_sf"/>
</dbReference>
<dbReference type="NCBIfam" id="TIGR01793">
    <property type="entry name" value="cit_synth_euk"/>
    <property type="match status" value="1"/>
</dbReference>
<dbReference type="NCBIfam" id="NF007128">
    <property type="entry name" value="PRK09569.1"/>
    <property type="match status" value="1"/>
</dbReference>
<dbReference type="PANTHER" id="PTHR11739">
    <property type="entry name" value="CITRATE SYNTHASE"/>
    <property type="match status" value="1"/>
</dbReference>
<dbReference type="PANTHER" id="PTHR11739:SF8">
    <property type="entry name" value="CITRATE SYNTHASE, MITOCHONDRIAL"/>
    <property type="match status" value="1"/>
</dbReference>
<dbReference type="Pfam" id="PF00285">
    <property type="entry name" value="Citrate_synt"/>
    <property type="match status" value="1"/>
</dbReference>
<dbReference type="PRINTS" id="PR00143">
    <property type="entry name" value="CITRTSNTHASE"/>
</dbReference>
<dbReference type="SUPFAM" id="SSF48256">
    <property type="entry name" value="Citrate synthase"/>
    <property type="match status" value="1"/>
</dbReference>
<dbReference type="PROSITE" id="PS00480">
    <property type="entry name" value="CITRATE_SYNTHASE"/>
    <property type="match status" value="1"/>
</dbReference>
<keyword id="KW-0496">Mitochondrion</keyword>
<keyword id="KW-0808">Transferase</keyword>
<keyword id="KW-0809">Transit peptide</keyword>
<keyword id="KW-0816">Tricarboxylic acid cycle</keyword>
<reference key="1">
    <citation type="submission" date="1998-08" db="EMBL/GenBank/DDBJ databases">
        <title>cDNA encoding carrot mitochondrial citrate synthase.</title>
        <authorList>
            <person name="Takita E."/>
            <person name="Koyama H."/>
            <person name="Shirano Y."/>
            <person name="Shibata D."/>
            <person name="Hara T."/>
        </authorList>
    </citation>
    <scope>NUCLEOTIDE SEQUENCE [MRNA]</scope>
    <source>
        <strain>cv. MS Yonsun</strain>
    </source>
</reference>
<proteinExistence type="evidence at transcript level"/>
<feature type="transit peptide" description="Mitochondrion" evidence="2">
    <location>
        <begin position="1"/>
        <end status="unknown"/>
    </location>
</feature>
<feature type="chain" id="PRO_0000005487" description="Citrate synthase, mitochondrial">
    <location>
        <begin status="unknown"/>
        <end position="472"/>
    </location>
</feature>
<feature type="active site" evidence="3">
    <location>
        <position position="308"/>
    </location>
</feature>
<feature type="active site" evidence="3">
    <location>
        <position position="354"/>
    </location>
</feature>
<feature type="active site" evidence="3">
    <location>
        <position position="409"/>
    </location>
</feature>
<sequence>MVFFRSVSLLNKLRSRAVQQSNLSNTVRWFQVQTSASDLDLRSQLKELIPEQQERIKKLKAEHGKVQLGNITVDMVLGGMRGMTGLLWETSLLDPEEGIRFRGLSIPECQKLLPGAKPGGEPLPEGLLWLLLTGKVPTKEQVDALSAELRSRAAVPEHVYKTIDALPVTAHPMTQFATGVMALQVQSEFQKAYEKGIHKTKYWEPTYEDSITLIAQLPVVAAYIYRRMYKNGQSISTDDSLDYGANFAHMLGYDSPSMQELMRLYVTIHTDHEGGNVSAHTGHLVASALSDPYLSFAAALNGLAGPLHGLANQEVLLWIKSVVSECGENVTKEQLKDYIWKTLNSGKVVPGYGHGVLRNTDPRYICQREFALKHLPDDPLFQLVSNLFEVVPPILTELGKVKNPWPNVDAHSGVLLNHYGLTEARYYTVLFGVSRAIGICSQLVWDRALGLPLERPKSVTMEWLENHCKKSS</sequence>
<name>CISY_DAUCA</name>
<comment type="catalytic activity">
    <reaction evidence="3">
        <text>oxaloacetate + acetyl-CoA + H2O = citrate + CoA + H(+)</text>
        <dbReference type="Rhea" id="RHEA:16845"/>
        <dbReference type="ChEBI" id="CHEBI:15377"/>
        <dbReference type="ChEBI" id="CHEBI:15378"/>
        <dbReference type="ChEBI" id="CHEBI:16452"/>
        <dbReference type="ChEBI" id="CHEBI:16947"/>
        <dbReference type="ChEBI" id="CHEBI:57287"/>
        <dbReference type="ChEBI" id="CHEBI:57288"/>
        <dbReference type="EC" id="2.3.3.16"/>
    </reaction>
</comment>
<comment type="pathway">
    <text>Carbohydrate metabolism; tricarboxylic acid cycle; isocitrate from oxaloacetate: step 1/2.</text>
</comment>
<comment type="subunit">
    <text evidence="1">Homodimer.</text>
</comment>
<comment type="subcellular location">
    <subcellularLocation>
        <location>Mitochondrion matrix</location>
    </subcellularLocation>
</comment>
<comment type="miscellaneous">
    <text>Citrate synthase is found in nearly all cells capable of oxidative metabolism.</text>
</comment>
<comment type="similarity">
    <text evidence="4">Belongs to the citrate synthase family.</text>
</comment>
<evidence type="ECO:0000250" key="1"/>
<evidence type="ECO:0000255" key="2"/>
<evidence type="ECO:0000255" key="3">
    <source>
        <dbReference type="PROSITE-ProRule" id="PRU10117"/>
    </source>
</evidence>
<evidence type="ECO:0000305" key="4"/>
<protein>
    <recommendedName>
        <fullName>Citrate synthase, mitochondrial</fullName>
        <ecNumber>2.3.3.16</ecNumber>
    </recommendedName>
</protein>
<gene>
    <name type="primary">CS</name>
</gene>
<organism>
    <name type="scientific">Daucus carota</name>
    <name type="common">Wild carrot</name>
    <dbReference type="NCBI Taxonomy" id="4039"/>
    <lineage>
        <taxon>Eukaryota</taxon>
        <taxon>Viridiplantae</taxon>
        <taxon>Streptophyta</taxon>
        <taxon>Embryophyta</taxon>
        <taxon>Tracheophyta</taxon>
        <taxon>Spermatophyta</taxon>
        <taxon>Magnoliopsida</taxon>
        <taxon>eudicotyledons</taxon>
        <taxon>Gunneridae</taxon>
        <taxon>Pentapetalae</taxon>
        <taxon>asterids</taxon>
        <taxon>campanulids</taxon>
        <taxon>Apiales</taxon>
        <taxon>Apiaceae</taxon>
        <taxon>Apioideae</taxon>
        <taxon>Scandiceae</taxon>
        <taxon>Daucinae</taxon>
        <taxon>Daucus</taxon>
        <taxon>Daucus sect. Daucus</taxon>
    </lineage>
</organism>
<accession>O80433</accession>